<comment type="function">
    <text evidence="1">Involved in systemic transport. Necessary for long-distance transport of the virus through the phloem.</text>
</comment>
<comment type="subunit">
    <text evidence="1">Interacts with Hsp70h.</text>
</comment>
<comment type="subcellular location">
    <subcellularLocation>
        <location evidence="1 2">Virion</location>
    </subcellularLocation>
    <text>Integral virion tail component. Presumably associates with the virion via binding to Hsp70h. Probably builts the tip segment of the virion tail.</text>
</comment>
<proteinExistence type="evidence at protein level"/>
<organism>
    <name type="scientific">Beet yellows virus (isolate Ukraine)</name>
    <name type="common">BYV</name>
    <name type="synonym">Sugar beet yellows virus</name>
    <dbReference type="NCBI Taxonomy" id="478555"/>
    <lineage>
        <taxon>Viruses</taxon>
        <taxon>Riboviria</taxon>
        <taxon>Orthornavirae</taxon>
        <taxon>Kitrinoviricota</taxon>
        <taxon>Alsuviricetes</taxon>
        <taxon>Martellivirales</taxon>
        <taxon>Closteroviridae</taxon>
        <taxon>Closterovirus</taxon>
        <taxon>Beet yellows virus</taxon>
    </lineage>
</organism>
<name>P20_BYVU</name>
<gene>
    <name type="ORF">ORF7</name>
</gene>
<feature type="chain" id="PRO_0000312569" description="20 kDa protein">
    <location>
        <begin position="1"/>
        <end position="180"/>
    </location>
</feature>
<keyword id="KW-1185">Reference proteome</keyword>
<keyword id="KW-0813">Transport</keyword>
<keyword id="KW-0946">Virion</keyword>
<evidence type="ECO:0000269" key="1">
    <source>
    </source>
</evidence>
<evidence type="ECO:0000269" key="2">
    <source>
    </source>
</evidence>
<accession>Q08544</accession>
<dbReference type="EMBL" id="X53462">
    <property type="protein sequence ID" value="CAA37555.1"/>
    <property type="molecule type" value="Genomic_RNA"/>
</dbReference>
<dbReference type="EMBL" id="X73476">
    <property type="protein sequence ID" value="CAA51869.1"/>
    <property type="molecule type" value="Genomic_RNA"/>
</dbReference>
<dbReference type="PIR" id="S28716">
    <property type="entry name" value="S28716"/>
</dbReference>
<dbReference type="RefSeq" id="NP_041876.1">
    <property type="nucleotide sequence ID" value="NC_001598.1"/>
</dbReference>
<dbReference type="KEGG" id="vg:1724789"/>
<dbReference type="Proteomes" id="UP000000359">
    <property type="component" value="Segment"/>
</dbReference>
<dbReference type="GO" id="GO:0044423">
    <property type="term" value="C:virion component"/>
    <property type="evidence" value="ECO:0007669"/>
    <property type="project" value="UniProtKB-KW"/>
</dbReference>
<reference key="1">
    <citation type="journal article" date="1991" name="J. Gen. Virol.">
        <title>Nucleotide sequence of the 3'-terminal half of beet yellows closterovirus RNA genome: unique arrangement of eight virus genes.</title>
        <authorList>
            <person name="Agranovsky A.A."/>
            <person name="Boyko V.P."/>
            <person name="Karasev A.V."/>
            <person name="Lunina N.A."/>
            <person name="Koonin E.V."/>
            <person name="Dolja V.V."/>
        </authorList>
    </citation>
    <scope>NUCLEOTIDE SEQUENCE [GENOMIC RNA]</scope>
</reference>
<reference key="2">
    <citation type="journal article" date="1994" name="Virology">
        <title>Beet yellows closterovirus: complete genome structure and identification of a leader papain-like thiol protease.</title>
        <authorList>
            <person name="Agranovsky A.A."/>
            <person name="Koonin E.V."/>
            <person name="Boyko V.P."/>
            <person name="Maiss E."/>
            <person name="Froetschl R."/>
            <person name="Lunina N.A."/>
            <person name="Atabekov J.G."/>
        </authorList>
    </citation>
    <scope>NUCLEOTIDE SEQUENCE [GENOMIC RNA]</scope>
</reference>
<reference key="3">
    <citation type="journal article" date="2002" name="J. Virol.">
        <title>Interaction between long-distance transport factor and Hsp70-related movement protein of Beet yellows virus.</title>
        <authorList>
            <person name="Prokhnevsky A.I."/>
            <person name="Peremyslov V.V."/>
            <person name="Napuli A.J."/>
            <person name="Dolja V.V."/>
        </authorList>
    </citation>
    <scope>FUNCTION</scope>
    <scope>SUBCELLULAR LOCATION</scope>
    <scope>INTERACTION WITH HSP70H</scope>
</reference>
<reference key="4">
    <citation type="journal article" date="2004" name="Proc. Natl. Acad. Sci. U.S.A.">
        <title>Complex molecular architecture of beet yellows virus particles.</title>
        <authorList>
            <person name="Peremyslov V.V."/>
            <person name="Andreev I.A."/>
            <person name="Prokhnevsky A.I."/>
            <person name="Duncan G.H."/>
            <person name="Taliansky M.E."/>
            <person name="Dolja V.V."/>
        </authorList>
    </citation>
    <scope>SUBCELLULAR LOCATION</scope>
</reference>
<sequence length="180" mass="20418">MTSSVELAQTKPLFRVLLLKGFVFYVVAFETEEESSEAELPLVYLHDFELNINKRGKIEASYVDFMSCMTRLKPSSVSYTRVSSEKSSEDFSLPGSGKTFGSKVLNRKVTFTFENGVQLVFGMYGLEQRCVSSDYLWFENVFVGAHCGTLTYCLNCELDKSGGELEILTFSKNEVLLKRW</sequence>
<organismHost>
    <name type="scientific">Beta vulgaris</name>
    <name type="common">Sugar beet</name>
    <dbReference type="NCBI Taxonomy" id="161934"/>
</organismHost>
<protein>
    <recommendedName>
        <fullName>20 kDa protein</fullName>
    </recommendedName>
    <alternativeName>
        <fullName>p20</fullName>
    </alternativeName>
</protein>